<proteinExistence type="inferred from homology"/>
<protein>
    <recommendedName>
        <fullName evidence="1">Large ribosomal subunit protein bL33C</fullName>
    </recommendedName>
    <alternativeName>
        <fullName evidence="1">50S ribosomal protein L33 3</fullName>
    </alternativeName>
</protein>
<organism>
    <name type="scientific">Streptococcus thermophilus (strain ATCC BAA-491 / LMD-9)</name>
    <dbReference type="NCBI Taxonomy" id="322159"/>
    <lineage>
        <taxon>Bacteria</taxon>
        <taxon>Bacillati</taxon>
        <taxon>Bacillota</taxon>
        <taxon>Bacilli</taxon>
        <taxon>Lactobacillales</taxon>
        <taxon>Streptococcaceae</taxon>
        <taxon>Streptococcus</taxon>
    </lineage>
</organism>
<sequence length="49" mass="5925">MRVNITLEHKESGERLYLTSKNKRNTPDRLQLKKYSPKLRKHVIFTEVK</sequence>
<keyword id="KW-0687">Ribonucleoprotein</keyword>
<keyword id="KW-0689">Ribosomal protein</keyword>
<accession>Q03IA9</accession>
<feature type="chain" id="PRO_0000356746" description="Large ribosomal subunit protein bL33C">
    <location>
        <begin position="1"/>
        <end position="49"/>
    </location>
</feature>
<dbReference type="EMBL" id="CP000419">
    <property type="protein sequence ID" value="ABJ67063.1"/>
    <property type="molecule type" value="Genomic_DNA"/>
</dbReference>
<dbReference type="SMR" id="Q03IA9"/>
<dbReference type="KEGG" id="ste:STER_1954"/>
<dbReference type="HOGENOM" id="CLU_190949_3_2_9"/>
<dbReference type="GO" id="GO:0005737">
    <property type="term" value="C:cytoplasm"/>
    <property type="evidence" value="ECO:0007669"/>
    <property type="project" value="UniProtKB-ARBA"/>
</dbReference>
<dbReference type="GO" id="GO:1990904">
    <property type="term" value="C:ribonucleoprotein complex"/>
    <property type="evidence" value="ECO:0007669"/>
    <property type="project" value="UniProtKB-KW"/>
</dbReference>
<dbReference type="GO" id="GO:0005840">
    <property type="term" value="C:ribosome"/>
    <property type="evidence" value="ECO:0007669"/>
    <property type="project" value="UniProtKB-KW"/>
</dbReference>
<dbReference type="GO" id="GO:0003735">
    <property type="term" value="F:structural constituent of ribosome"/>
    <property type="evidence" value="ECO:0007669"/>
    <property type="project" value="InterPro"/>
</dbReference>
<dbReference type="GO" id="GO:0006412">
    <property type="term" value="P:translation"/>
    <property type="evidence" value="ECO:0007669"/>
    <property type="project" value="UniProtKB-UniRule"/>
</dbReference>
<dbReference type="Gene3D" id="2.20.28.120">
    <property type="entry name" value="Ribosomal protein L33"/>
    <property type="match status" value="1"/>
</dbReference>
<dbReference type="HAMAP" id="MF_00294">
    <property type="entry name" value="Ribosomal_bL33"/>
    <property type="match status" value="1"/>
</dbReference>
<dbReference type="InterPro" id="IPR001705">
    <property type="entry name" value="Ribosomal_bL33"/>
</dbReference>
<dbReference type="InterPro" id="IPR018264">
    <property type="entry name" value="Ribosomal_bL33_CS"/>
</dbReference>
<dbReference type="InterPro" id="IPR038584">
    <property type="entry name" value="Ribosomal_bL33_sf"/>
</dbReference>
<dbReference type="InterPro" id="IPR011332">
    <property type="entry name" value="Ribosomal_zn-bd"/>
</dbReference>
<dbReference type="NCBIfam" id="NF001764">
    <property type="entry name" value="PRK00504.1"/>
    <property type="match status" value="1"/>
</dbReference>
<dbReference type="NCBIfam" id="NF001860">
    <property type="entry name" value="PRK00595.1"/>
    <property type="match status" value="1"/>
</dbReference>
<dbReference type="NCBIfam" id="TIGR01023">
    <property type="entry name" value="rpmG_bact"/>
    <property type="match status" value="1"/>
</dbReference>
<dbReference type="PANTHER" id="PTHR43168">
    <property type="entry name" value="50S RIBOSOMAL PROTEIN L33, CHLOROPLASTIC"/>
    <property type="match status" value="1"/>
</dbReference>
<dbReference type="PANTHER" id="PTHR43168:SF2">
    <property type="entry name" value="LARGE RIBOSOMAL SUBUNIT PROTEIN BL33C"/>
    <property type="match status" value="1"/>
</dbReference>
<dbReference type="Pfam" id="PF00471">
    <property type="entry name" value="Ribosomal_L33"/>
    <property type="match status" value="1"/>
</dbReference>
<dbReference type="SUPFAM" id="SSF57829">
    <property type="entry name" value="Zn-binding ribosomal proteins"/>
    <property type="match status" value="1"/>
</dbReference>
<dbReference type="PROSITE" id="PS00582">
    <property type="entry name" value="RIBOSOMAL_L33"/>
    <property type="match status" value="1"/>
</dbReference>
<gene>
    <name evidence="1" type="primary">rpmG3</name>
    <name type="ordered locus">STER_1954</name>
</gene>
<evidence type="ECO:0000255" key="1">
    <source>
        <dbReference type="HAMAP-Rule" id="MF_00294"/>
    </source>
</evidence>
<reference key="1">
    <citation type="journal article" date="2006" name="Proc. Natl. Acad. Sci. U.S.A.">
        <title>Comparative genomics of the lactic acid bacteria.</title>
        <authorList>
            <person name="Makarova K.S."/>
            <person name="Slesarev A."/>
            <person name="Wolf Y.I."/>
            <person name="Sorokin A."/>
            <person name="Mirkin B."/>
            <person name="Koonin E.V."/>
            <person name="Pavlov A."/>
            <person name="Pavlova N."/>
            <person name="Karamychev V."/>
            <person name="Polouchine N."/>
            <person name="Shakhova V."/>
            <person name="Grigoriev I."/>
            <person name="Lou Y."/>
            <person name="Rohksar D."/>
            <person name="Lucas S."/>
            <person name="Huang K."/>
            <person name="Goodstein D.M."/>
            <person name="Hawkins T."/>
            <person name="Plengvidhya V."/>
            <person name="Welker D."/>
            <person name="Hughes J."/>
            <person name="Goh Y."/>
            <person name="Benson A."/>
            <person name="Baldwin K."/>
            <person name="Lee J.-H."/>
            <person name="Diaz-Muniz I."/>
            <person name="Dosti B."/>
            <person name="Smeianov V."/>
            <person name="Wechter W."/>
            <person name="Barabote R."/>
            <person name="Lorca G."/>
            <person name="Altermann E."/>
            <person name="Barrangou R."/>
            <person name="Ganesan B."/>
            <person name="Xie Y."/>
            <person name="Rawsthorne H."/>
            <person name="Tamir D."/>
            <person name="Parker C."/>
            <person name="Breidt F."/>
            <person name="Broadbent J.R."/>
            <person name="Hutkins R."/>
            <person name="O'Sullivan D."/>
            <person name="Steele J."/>
            <person name="Unlu G."/>
            <person name="Saier M.H. Jr."/>
            <person name="Klaenhammer T."/>
            <person name="Richardson P."/>
            <person name="Kozyavkin S."/>
            <person name="Weimer B.C."/>
            <person name="Mills D.A."/>
        </authorList>
    </citation>
    <scope>NUCLEOTIDE SEQUENCE [LARGE SCALE GENOMIC DNA]</scope>
    <source>
        <strain>ATCC BAA-491 / LMD-9</strain>
    </source>
</reference>
<comment type="similarity">
    <text evidence="1">Belongs to the bacterial ribosomal protein bL33 family.</text>
</comment>
<name>RL333_STRTD</name>